<protein>
    <recommendedName>
        <fullName evidence="1">Endoribonuclease YbeY</fullName>
        <ecNumber evidence="1">3.1.-.-</ecNumber>
    </recommendedName>
</protein>
<accession>A4XAD4</accession>
<proteinExistence type="inferred from homology"/>
<organism>
    <name type="scientific">Salinispora tropica (strain ATCC BAA-916 / DSM 44818 / JCM 13857 / NBRC 105044 / CNB-440)</name>
    <dbReference type="NCBI Taxonomy" id="369723"/>
    <lineage>
        <taxon>Bacteria</taxon>
        <taxon>Bacillati</taxon>
        <taxon>Actinomycetota</taxon>
        <taxon>Actinomycetes</taxon>
        <taxon>Micromonosporales</taxon>
        <taxon>Micromonosporaceae</taxon>
        <taxon>Salinispora</taxon>
    </lineage>
</organism>
<name>YBEY_SALTO</name>
<feature type="chain" id="PRO_1000073918" description="Endoribonuclease YbeY">
    <location>
        <begin position="1"/>
        <end position="157"/>
    </location>
</feature>
<feature type="binding site" evidence="1">
    <location>
        <position position="121"/>
    </location>
    <ligand>
        <name>Zn(2+)</name>
        <dbReference type="ChEBI" id="CHEBI:29105"/>
        <note>catalytic</note>
    </ligand>
</feature>
<feature type="binding site" evidence="1">
    <location>
        <position position="125"/>
    </location>
    <ligand>
        <name>Zn(2+)</name>
        <dbReference type="ChEBI" id="CHEBI:29105"/>
        <note>catalytic</note>
    </ligand>
</feature>
<feature type="binding site" evidence="1">
    <location>
        <position position="131"/>
    </location>
    <ligand>
        <name>Zn(2+)</name>
        <dbReference type="ChEBI" id="CHEBI:29105"/>
        <note>catalytic</note>
    </ligand>
</feature>
<sequence length="157" mass="16761">MSIEIANESGADVDTDAVLAVARHALDEMGVNQLAELSVLLVDIDYMAELNHRWMGGDGPTDVLAFPMDEGSVDHGPGENAAAGAEPALLGDIVLCPEVAAKQAVTAGHSTADELHLLTVHGVLHLLGYDHAEPEEEREMFALQARLLASWRSTRSR</sequence>
<keyword id="KW-0963">Cytoplasm</keyword>
<keyword id="KW-0255">Endonuclease</keyword>
<keyword id="KW-0378">Hydrolase</keyword>
<keyword id="KW-0479">Metal-binding</keyword>
<keyword id="KW-0540">Nuclease</keyword>
<keyword id="KW-1185">Reference proteome</keyword>
<keyword id="KW-0690">Ribosome biogenesis</keyword>
<keyword id="KW-0698">rRNA processing</keyword>
<keyword id="KW-0862">Zinc</keyword>
<evidence type="ECO:0000255" key="1">
    <source>
        <dbReference type="HAMAP-Rule" id="MF_00009"/>
    </source>
</evidence>
<dbReference type="EC" id="3.1.-.-" evidence="1"/>
<dbReference type="EMBL" id="CP000667">
    <property type="protein sequence ID" value="ABP55883.1"/>
    <property type="molecule type" value="Genomic_DNA"/>
</dbReference>
<dbReference type="RefSeq" id="WP_012014658.1">
    <property type="nucleotide sequence ID" value="NC_009380.1"/>
</dbReference>
<dbReference type="SMR" id="A4XAD4"/>
<dbReference type="STRING" id="369723.Strop_3452"/>
<dbReference type="KEGG" id="stp:Strop_3452"/>
<dbReference type="PATRIC" id="fig|369723.5.peg.3560"/>
<dbReference type="eggNOG" id="COG0319">
    <property type="taxonomic scope" value="Bacteria"/>
</dbReference>
<dbReference type="HOGENOM" id="CLU_106710_3_2_11"/>
<dbReference type="Proteomes" id="UP000000235">
    <property type="component" value="Chromosome"/>
</dbReference>
<dbReference type="GO" id="GO:0005737">
    <property type="term" value="C:cytoplasm"/>
    <property type="evidence" value="ECO:0007669"/>
    <property type="project" value="UniProtKB-SubCell"/>
</dbReference>
<dbReference type="GO" id="GO:0004222">
    <property type="term" value="F:metalloendopeptidase activity"/>
    <property type="evidence" value="ECO:0007669"/>
    <property type="project" value="InterPro"/>
</dbReference>
<dbReference type="GO" id="GO:0004521">
    <property type="term" value="F:RNA endonuclease activity"/>
    <property type="evidence" value="ECO:0007669"/>
    <property type="project" value="UniProtKB-UniRule"/>
</dbReference>
<dbReference type="GO" id="GO:0008270">
    <property type="term" value="F:zinc ion binding"/>
    <property type="evidence" value="ECO:0007669"/>
    <property type="project" value="UniProtKB-UniRule"/>
</dbReference>
<dbReference type="GO" id="GO:0006364">
    <property type="term" value="P:rRNA processing"/>
    <property type="evidence" value="ECO:0007669"/>
    <property type="project" value="UniProtKB-UniRule"/>
</dbReference>
<dbReference type="Gene3D" id="3.40.390.30">
    <property type="entry name" value="Metalloproteases ('zincins'), catalytic domain"/>
    <property type="match status" value="1"/>
</dbReference>
<dbReference type="HAMAP" id="MF_00009">
    <property type="entry name" value="Endoribonucl_YbeY"/>
    <property type="match status" value="1"/>
</dbReference>
<dbReference type="InterPro" id="IPR023091">
    <property type="entry name" value="MetalPrtase_cat_dom_sf_prd"/>
</dbReference>
<dbReference type="InterPro" id="IPR002036">
    <property type="entry name" value="YbeY"/>
</dbReference>
<dbReference type="InterPro" id="IPR020549">
    <property type="entry name" value="YbeY_CS"/>
</dbReference>
<dbReference type="NCBIfam" id="TIGR00043">
    <property type="entry name" value="rRNA maturation RNase YbeY"/>
    <property type="match status" value="1"/>
</dbReference>
<dbReference type="PANTHER" id="PTHR46986">
    <property type="entry name" value="ENDORIBONUCLEASE YBEY, CHLOROPLASTIC"/>
    <property type="match status" value="1"/>
</dbReference>
<dbReference type="PANTHER" id="PTHR46986:SF1">
    <property type="entry name" value="ENDORIBONUCLEASE YBEY, CHLOROPLASTIC"/>
    <property type="match status" value="1"/>
</dbReference>
<dbReference type="Pfam" id="PF02130">
    <property type="entry name" value="YbeY"/>
    <property type="match status" value="1"/>
</dbReference>
<dbReference type="SUPFAM" id="SSF55486">
    <property type="entry name" value="Metalloproteases ('zincins'), catalytic domain"/>
    <property type="match status" value="1"/>
</dbReference>
<dbReference type="PROSITE" id="PS01306">
    <property type="entry name" value="UPF0054"/>
    <property type="match status" value="1"/>
</dbReference>
<comment type="function">
    <text evidence="1">Single strand-specific metallo-endoribonuclease involved in late-stage 70S ribosome quality control and in maturation of the 3' terminus of the 16S rRNA.</text>
</comment>
<comment type="cofactor">
    <cofactor evidence="1">
        <name>Zn(2+)</name>
        <dbReference type="ChEBI" id="CHEBI:29105"/>
    </cofactor>
    <text evidence="1">Binds 1 zinc ion.</text>
</comment>
<comment type="subcellular location">
    <subcellularLocation>
        <location evidence="1">Cytoplasm</location>
    </subcellularLocation>
</comment>
<comment type="similarity">
    <text evidence="1">Belongs to the endoribonuclease YbeY family.</text>
</comment>
<gene>
    <name evidence="1" type="primary">ybeY</name>
    <name type="ordered locus">Strop_3452</name>
</gene>
<reference key="1">
    <citation type="journal article" date="2007" name="Proc. Natl. Acad. Sci. U.S.A.">
        <title>Genome sequencing reveals complex secondary metabolome in the marine actinomycete Salinispora tropica.</title>
        <authorList>
            <person name="Udwary D.W."/>
            <person name="Zeigler L."/>
            <person name="Asolkar R.N."/>
            <person name="Singan V."/>
            <person name="Lapidus A."/>
            <person name="Fenical W."/>
            <person name="Jensen P.R."/>
            <person name="Moore B.S."/>
        </authorList>
    </citation>
    <scope>NUCLEOTIDE SEQUENCE [LARGE SCALE GENOMIC DNA]</scope>
    <source>
        <strain>ATCC BAA-916 / DSM 44818 / JCM 13857 / NBRC 105044 / CNB-440</strain>
    </source>
</reference>